<keyword id="KW-0963">Cytoplasm</keyword>
<keyword id="KW-0251">Elongation factor</keyword>
<keyword id="KW-0342">GTP-binding</keyword>
<keyword id="KW-0378">Hydrolase</keyword>
<keyword id="KW-0460">Magnesium</keyword>
<keyword id="KW-0479">Metal-binding</keyword>
<keyword id="KW-0547">Nucleotide-binding</keyword>
<keyword id="KW-0648">Protein biosynthesis</keyword>
<keyword id="KW-1185">Reference proteome</keyword>
<organism>
    <name type="scientific">Alcanivorax borkumensis (strain ATCC 700651 / DSM 11573 / NCIMB 13689 / SK2)</name>
    <dbReference type="NCBI Taxonomy" id="393595"/>
    <lineage>
        <taxon>Bacteria</taxon>
        <taxon>Pseudomonadati</taxon>
        <taxon>Pseudomonadota</taxon>
        <taxon>Gammaproteobacteria</taxon>
        <taxon>Oceanospirillales</taxon>
        <taxon>Alcanivoracaceae</taxon>
        <taxon>Alcanivorax</taxon>
    </lineage>
</organism>
<dbReference type="EC" id="3.6.5.3" evidence="2"/>
<dbReference type="EMBL" id="AM286690">
    <property type="protein sequence ID" value="CAL15819.1"/>
    <property type="molecule type" value="Genomic_DNA"/>
</dbReference>
<dbReference type="EMBL" id="AM286690">
    <property type="protein sequence ID" value="CAL15831.1"/>
    <property type="molecule type" value="Genomic_DNA"/>
</dbReference>
<dbReference type="RefSeq" id="WP_011587666.1">
    <property type="nucleotide sequence ID" value="NC_008260.1"/>
</dbReference>
<dbReference type="SMR" id="Q0VSL7"/>
<dbReference type="STRING" id="393595.ABO_0371"/>
<dbReference type="KEGG" id="abo:ABO_0371"/>
<dbReference type="KEGG" id="abo:ABO_0383"/>
<dbReference type="eggNOG" id="COG0050">
    <property type="taxonomic scope" value="Bacteria"/>
</dbReference>
<dbReference type="HOGENOM" id="CLU_007265_0_2_6"/>
<dbReference type="OrthoDB" id="9803139at2"/>
<dbReference type="Proteomes" id="UP000008871">
    <property type="component" value="Chromosome"/>
</dbReference>
<dbReference type="GO" id="GO:0005829">
    <property type="term" value="C:cytosol"/>
    <property type="evidence" value="ECO:0007669"/>
    <property type="project" value="TreeGrafter"/>
</dbReference>
<dbReference type="GO" id="GO:0005525">
    <property type="term" value="F:GTP binding"/>
    <property type="evidence" value="ECO:0007669"/>
    <property type="project" value="UniProtKB-UniRule"/>
</dbReference>
<dbReference type="GO" id="GO:0003924">
    <property type="term" value="F:GTPase activity"/>
    <property type="evidence" value="ECO:0007669"/>
    <property type="project" value="InterPro"/>
</dbReference>
<dbReference type="GO" id="GO:0097216">
    <property type="term" value="F:guanosine tetraphosphate binding"/>
    <property type="evidence" value="ECO:0007669"/>
    <property type="project" value="UniProtKB-ARBA"/>
</dbReference>
<dbReference type="GO" id="GO:0003746">
    <property type="term" value="F:translation elongation factor activity"/>
    <property type="evidence" value="ECO:0007669"/>
    <property type="project" value="UniProtKB-UniRule"/>
</dbReference>
<dbReference type="CDD" id="cd01884">
    <property type="entry name" value="EF_Tu"/>
    <property type="match status" value="1"/>
</dbReference>
<dbReference type="CDD" id="cd03697">
    <property type="entry name" value="EFTU_II"/>
    <property type="match status" value="1"/>
</dbReference>
<dbReference type="CDD" id="cd03707">
    <property type="entry name" value="EFTU_III"/>
    <property type="match status" value="1"/>
</dbReference>
<dbReference type="FunFam" id="2.40.30.10:FF:000001">
    <property type="entry name" value="Elongation factor Tu"/>
    <property type="match status" value="1"/>
</dbReference>
<dbReference type="FunFam" id="3.40.50.300:FF:000003">
    <property type="entry name" value="Elongation factor Tu"/>
    <property type="match status" value="1"/>
</dbReference>
<dbReference type="Gene3D" id="3.40.50.300">
    <property type="entry name" value="P-loop containing nucleotide triphosphate hydrolases"/>
    <property type="match status" value="1"/>
</dbReference>
<dbReference type="Gene3D" id="2.40.30.10">
    <property type="entry name" value="Translation factors"/>
    <property type="match status" value="2"/>
</dbReference>
<dbReference type="HAMAP" id="MF_00118_B">
    <property type="entry name" value="EF_Tu_B"/>
    <property type="match status" value="1"/>
</dbReference>
<dbReference type="InterPro" id="IPR041709">
    <property type="entry name" value="EF-Tu_GTP-bd"/>
</dbReference>
<dbReference type="InterPro" id="IPR050055">
    <property type="entry name" value="EF-Tu_GTPase"/>
</dbReference>
<dbReference type="InterPro" id="IPR004161">
    <property type="entry name" value="EFTu-like_2"/>
</dbReference>
<dbReference type="InterPro" id="IPR033720">
    <property type="entry name" value="EFTU_2"/>
</dbReference>
<dbReference type="InterPro" id="IPR031157">
    <property type="entry name" value="G_TR_CS"/>
</dbReference>
<dbReference type="InterPro" id="IPR027417">
    <property type="entry name" value="P-loop_NTPase"/>
</dbReference>
<dbReference type="InterPro" id="IPR005225">
    <property type="entry name" value="Small_GTP-bd"/>
</dbReference>
<dbReference type="InterPro" id="IPR000795">
    <property type="entry name" value="T_Tr_GTP-bd_dom"/>
</dbReference>
<dbReference type="InterPro" id="IPR009000">
    <property type="entry name" value="Transl_B-barrel_sf"/>
</dbReference>
<dbReference type="InterPro" id="IPR009001">
    <property type="entry name" value="Transl_elong_EF1A/Init_IF2_C"/>
</dbReference>
<dbReference type="InterPro" id="IPR004541">
    <property type="entry name" value="Transl_elong_EFTu/EF1A_bac/org"/>
</dbReference>
<dbReference type="InterPro" id="IPR004160">
    <property type="entry name" value="Transl_elong_EFTu/EF1A_C"/>
</dbReference>
<dbReference type="NCBIfam" id="TIGR00485">
    <property type="entry name" value="EF-Tu"/>
    <property type="match status" value="1"/>
</dbReference>
<dbReference type="NCBIfam" id="NF000766">
    <property type="entry name" value="PRK00049.1"/>
    <property type="match status" value="1"/>
</dbReference>
<dbReference type="NCBIfam" id="NF009372">
    <property type="entry name" value="PRK12735.1"/>
    <property type="match status" value="1"/>
</dbReference>
<dbReference type="NCBIfam" id="NF009373">
    <property type="entry name" value="PRK12736.1"/>
    <property type="match status" value="1"/>
</dbReference>
<dbReference type="NCBIfam" id="TIGR00231">
    <property type="entry name" value="small_GTP"/>
    <property type="match status" value="1"/>
</dbReference>
<dbReference type="PANTHER" id="PTHR43721:SF22">
    <property type="entry name" value="ELONGATION FACTOR TU, MITOCHONDRIAL"/>
    <property type="match status" value="1"/>
</dbReference>
<dbReference type="PANTHER" id="PTHR43721">
    <property type="entry name" value="ELONGATION FACTOR TU-RELATED"/>
    <property type="match status" value="1"/>
</dbReference>
<dbReference type="Pfam" id="PF00009">
    <property type="entry name" value="GTP_EFTU"/>
    <property type="match status" value="1"/>
</dbReference>
<dbReference type="Pfam" id="PF03144">
    <property type="entry name" value="GTP_EFTU_D2"/>
    <property type="match status" value="1"/>
</dbReference>
<dbReference type="Pfam" id="PF03143">
    <property type="entry name" value="GTP_EFTU_D3"/>
    <property type="match status" value="1"/>
</dbReference>
<dbReference type="PRINTS" id="PR00315">
    <property type="entry name" value="ELONGATNFCT"/>
</dbReference>
<dbReference type="SUPFAM" id="SSF50465">
    <property type="entry name" value="EF-Tu/eEF-1alpha/eIF2-gamma C-terminal domain"/>
    <property type="match status" value="1"/>
</dbReference>
<dbReference type="SUPFAM" id="SSF52540">
    <property type="entry name" value="P-loop containing nucleoside triphosphate hydrolases"/>
    <property type="match status" value="1"/>
</dbReference>
<dbReference type="SUPFAM" id="SSF50447">
    <property type="entry name" value="Translation proteins"/>
    <property type="match status" value="1"/>
</dbReference>
<dbReference type="PROSITE" id="PS00301">
    <property type="entry name" value="G_TR_1"/>
    <property type="match status" value="1"/>
</dbReference>
<dbReference type="PROSITE" id="PS51722">
    <property type="entry name" value="G_TR_2"/>
    <property type="match status" value="1"/>
</dbReference>
<feature type="chain" id="PRO_0000337308" description="Elongation factor Tu">
    <location>
        <begin position="1"/>
        <end position="396"/>
    </location>
</feature>
<feature type="domain" description="tr-type G">
    <location>
        <begin position="10"/>
        <end position="206"/>
    </location>
</feature>
<feature type="region of interest" description="G1" evidence="1">
    <location>
        <begin position="19"/>
        <end position="26"/>
    </location>
</feature>
<feature type="region of interest" description="G2" evidence="1">
    <location>
        <begin position="60"/>
        <end position="64"/>
    </location>
</feature>
<feature type="region of interest" description="G3" evidence="1">
    <location>
        <begin position="81"/>
        <end position="84"/>
    </location>
</feature>
<feature type="region of interest" description="G4" evidence="1">
    <location>
        <begin position="136"/>
        <end position="139"/>
    </location>
</feature>
<feature type="region of interest" description="G5" evidence="1">
    <location>
        <begin position="174"/>
        <end position="176"/>
    </location>
</feature>
<feature type="binding site" evidence="2">
    <location>
        <begin position="19"/>
        <end position="26"/>
    </location>
    <ligand>
        <name>GTP</name>
        <dbReference type="ChEBI" id="CHEBI:37565"/>
    </ligand>
</feature>
<feature type="binding site" evidence="2">
    <location>
        <position position="26"/>
    </location>
    <ligand>
        <name>Mg(2+)</name>
        <dbReference type="ChEBI" id="CHEBI:18420"/>
    </ligand>
</feature>
<feature type="binding site" evidence="2">
    <location>
        <begin position="81"/>
        <end position="85"/>
    </location>
    <ligand>
        <name>GTP</name>
        <dbReference type="ChEBI" id="CHEBI:37565"/>
    </ligand>
</feature>
<feature type="binding site" evidence="2">
    <location>
        <begin position="136"/>
        <end position="139"/>
    </location>
    <ligand>
        <name>GTP</name>
        <dbReference type="ChEBI" id="CHEBI:37565"/>
    </ligand>
</feature>
<proteinExistence type="inferred from homology"/>
<accession>Q0VSL7</accession>
<comment type="function">
    <text evidence="2">GTP hydrolase that promotes the GTP-dependent binding of aminoacyl-tRNA to the A-site of ribosomes during protein biosynthesis.</text>
</comment>
<comment type="catalytic activity">
    <reaction evidence="2">
        <text>GTP + H2O = GDP + phosphate + H(+)</text>
        <dbReference type="Rhea" id="RHEA:19669"/>
        <dbReference type="ChEBI" id="CHEBI:15377"/>
        <dbReference type="ChEBI" id="CHEBI:15378"/>
        <dbReference type="ChEBI" id="CHEBI:37565"/>
        <dbReference type="ChEBI" id="CHEBI:43474"/>
        <dbReference type="ChEBI" id="CHEBI:58189"/>
        <dbReference type="EC" id="3.6.5.3"/>
    </reaction>
    <physiologicalReaction direction="left-to-right" evidence="2">
        <dbReference type="Rhea" id="RHEA:19670"/>
    </physiologicalReaction>
</comment>
<comment type="subunit">
    <text evidence="2">Monomer.</text>
</comment>
<comment type="subcellular location">
    <subcellularLocation>
        <location evidence="2">Cytoplasm</location>
    </subcellularLocation>
</comment>
<comment type="similarity">
    <text evidence="2">Belongs to the TRAFAC class translation factor GTPase superfamily. Classic translation factor GTPase family. EF-Tu/EF-1A subfamily.</text>
</comment>
<evidence type="ECO:0000250" key="1"/>
<evidence type="ECO:0000255" key="2">
    <source>
        <dbReference type="HAMAP-Rule" id="MF_00118"/>
    </source>
</evidence>
<reference key="1">
    <citation type="journal article" date="2006" name="Nat. Biotechnol.">
        <title>Genome sequence of the ubiquitous hydrocarbon-degrading marine bacterium Alcanivorax borkumensis.</title>
        <authorList>
            <person name="Schneiker S."/>
            <person name="Martins dos Santos V.A.P."/>
            <person name="Bartels D."/>
            <person name="Bekel T."/>
            <person name="Brecht M."/>
            <person name="Buhrmester J."/>
            <person name="Chernikova T.N."/>
            <person name="Denaro R."/>
            <person name="Ferrer M."/>
            <person name="Gertler C."/>
            <person name="Goesmann A."/>
            <person name="Golyshina O.V."/>
            <person name="Kaminski F."/>
            <person name="Khachane A.N."/>
            <person name="Lang S."/>
            <person name="Linke B."/>
            <person name="McHardy A.C."/>
            <person name="Meyer F."/>
            <person name="Nechitaylo T."/>
            <person name="Puehler A."/>
            <person name="Regenhardt D."/>
            <person name="Rupp O."/>
            <person name="Sabirova J.S."/>
            <person name="Selbitschka W."/>
            <person name="Yakimov M.M."/>
            <person name="Timmis K.N."/>
            <person name="Vorhoelter F.-J."/>
            <person name="Weidner S."/>
            <person name="Kaiser O."/>
            <person name="Golyshin P.N."/>
        </authorList>
    </citation>
    <scope>NUCLEOTIDE SEQUENCE [LARGE SCALE GENOMIC DNA]</scope>
    <source>
        <strain>ATCC 700651 / DSM 11573 / NCIMB 13689 / SK2</strain>
    </source>
</reference>
<gene>
    <name evidence="2" type="primary">tuf1</name>
    <name type="synonym">tuf-1</name>
    <name type="ordered locus">ABO_0371</name>
</gene>
<gene>
    <name evidence="2" type="primary">tuf2</name>
    <name type="synonym">tuf</name>
    <name type="ordered locus">ABO_0383</name>
</gene>
<sequence length="396" mass="43222">MAKEKFERNKPHVNVGTIGHVDHGKTTLTAALTRVCAEVWGGNAVAFDGIDNAPEERERGITIATSHVEYDSPTRHYAHVDCPGHADYVKNMITGAAQMDGAILVCSAADGPMPQTREHILLSRQVGVPYIVVFLNKADMVDDEELLELVEMEVRELLSDYDFPGDDTPIIKGSALKALEGDTSDIGMPAVQKLVETLDEYIPEPERAVDQPFLMPIEDVFSISGRGTVVTGRVERGIVKVGEEIEIVGIHDTTKTTCTGVEMFRKLLDEGRAGENVGVLLRGTKRDEVERGQVLAKPGSINPHTKFVAEVYVLSKDEGGRHTPFFNGYRPQFYFRTTDVTGACTLPEGTEMVMPGDNVQMDVELIAPIAMEDGLRFAIREGGRTVGAGVVAKITE</sequence>
<protein>
    <recommendedName>
        <fullName evidence="2">Elongation factor Tu</fullName>
        <shortName evidence="2">EF-Tu</shortName>
        <ecNumber evidence="2">3.6.5.3</ecNumber>
    </recommendedName>
</protein>
<name>EFTU_ALCBS</name>